<name>YCAR_ECOBW</name>
<comment type="similarity">
    <text evidence="1">Belongs to the UPF0434 family.</text>
</comment>
<dbReference type="EMBL" id="CP001396">
    <property type="protein sequence ID" value="ACR62451.1"/>
    <property type="molecule type" value="Genomic_DNA"/>
</dbReference>
<dbReference type="RefSeq" id="WP_000350058.1">
    <property type="nucleotide sequence ID" value="NC_012759.1"/>
</dbReference>
<dbReference type="SMR" id="C4ZQ43"/>
<dbReference type="GeneID" id="93776498"/>
<dbReference type="KEGG" id="ebw:BWG_0769"/>
<dbReference type="HOGENOM" id="CLU_155659_3_1_6"/>
<dbReference type="GO" id="GO:0005829">
    <property type="term" value="C:cytosol"/>
    <property type="evidence" value="ECO:0007669"/>
    <property type="project" value="TreeGrafter"/>
</dbReference>
<dbReference type="FunFam" id="2.20.25.10:FF:000002">
    <property type="entry name" value="UPF0434 protein YcaR"/>
    <property type="match status" value="1"/>
</dbReference>
<dbReference type="Gene3D" id="2.20.25.10">
    <property type="match status" value="1"/>
</dbReference>
<dbReference type="HAMAP" id="MF_01187">
    <property type="entry name" value="UPF0434"/>
    <property type="match status" value="1"/>
</dbReference>
<dbReference type="InterPro" id="IPR005651">
    <property type="entry name" value="Trm112-like"/>
</dbReference>
<dbReference type="NCBIfam" id="NF008806">
    <property type="entry name" value="PRK11827.1"/>
    <property type="match status" value="1"/>
</dbReference>
<dbReference type="PANTHER" id="PTHR33505:SF4">
    <property type="entry name" value="PROTEIN PREY, MITOCHONDRIAL"/>
    <property type="match status" value="1"/>
</dbReference>
<dbReference type="PANTHER" id="PTHR33505">
    <property type="entry name" value="ZGC:162634"/>
    <property type="match status" value="1"/>
</dbReference>
<dbReference type="Pfam" id="PF03966">
    <property type="entry name" value="Trm112p"/>
    <property type="match status" value="1"/>
</dbReference>
<dbReference type="SUPFAM" id="SSF158997">
    <property type="entry name" value="Trm112p-like"/>
    <property type="match status" value="1"/>
</dbReference>
<organism>
    <name type="scientific">Escherichia coli (strain K12 / MC4100 / BW2952)</name>
    <dbReference type="NCBI Taxonomy" id="595496"/>
    <lineage>
        <taxon>Bacteria</taxon>
        <taxon>Pseudomonadati</taxon>
        <taxon>Pseudomonadota</taxon>
        <taxon>Gammaproteobacteria</taxon>
        <taxon>Enterobacterales</taxon>
        <taxon>Enterobacteriaceae</taxon>
        <taxon>Escherichia</taxon>
    </lineage>
</organism>
<protein>
    <recommendedName>
        <fullName evidence="1">UPF0434 protein YcaR</fullName>
    </recommendedName>
</protein>
<proteinExistence type="inferred from homology"/>
<evidence type="ECO:0000255" key="1">
    <source>
        <dbReference type="HAMAP-Rule" id="MF_01187"/>
    </source>
</evidence>
<sequence length="60" mass="6855">MDHRLLEIIACPVCNGKLWYNQEKQELICKLDNLAFPLRDGIPVLLETEARVLTADESKS</sequence>
<reference key="1">
    <citation type="journal article" date="2009" name="J. Bacteriol.">
        <title>Genomic sequencing reveals regulatory mutations and recombinational events in the widely used MC4100 lineage of Escherichia coli K-12.</title>
        <authorList>
            <person name="Ferenci T."/>
            <person name="Zhou Z."/>
            <person name="Betteridge T."/>
            <person name="Ren Y."/>
            <person name="Liu Y."/>
            <person name="Feng L."/>
            <person name="Reeves P.R."/>
            <person name="Wang L."/>
        </authorList>
    </citation>
    <scope>NUCLEOTIDE SEQUENCE [LARGE SCALE GENOMIC DNA]</scope>
    <source>
        <strain>K12 / MC4100 / BW2952</strain>
    </source>
</reference>
<accession>C4ZQ43</accession>
<gene>
    <name evidence="1" type="primary">ycaR</name>
    <name type="ordered locus">BWG_0769</name>
</gene>
<feature type="chain" id="PRO_1000213781" description="UPF0434 protein YcaR">
    <location>
        <begin position="1"/>
        <end position="60"/>
    </location>
</feature>